<evidence type="ECO:0000255" key="1">
    <source>
        <dbReference type="HAMAP-Rule" id="MF_01333"/>
    </source>
</evidence>
<evidence type="ECO:0000305" key="2"/>
<accession>Q83FZ8</accession>
<feature type="chain" id="PRO_0000125020" description="Large ribosomal subunit protein uL5">
    <location>
        <begin position="1"/>
        <end position="183"/>
    </location>
</feature>
<keyword id="KW-1185">Reference proteome</keyword>
<keyword id="KW-0687">Ribonucleoprotein</keyword>
<keyword id="KW-0689">Ribosomal protein</keyword>
<keyword id="KW-0694">RNA-binding</keyword>
<keyword id="KW-0699">rRNA-binding</keyword>
<keyword id="KW-0820">tRNA-binding</keyword>
<reference key="1">
    <citation type="journal article" date="2003" name="Genome Res.">
        <title>Tropheryma whipplei twist: a human pathogenic Actinobacteria with a reduced genome.</title>
        <authorList>
            <person name="Raoult D."/>
            <person name="Ogata H."/>
            <person name="Audic S."/>
            <person name="Robert C."/>
            <person name="Suhre K."/>
            <person name="Drancourt M."/>
            <person name="Claverie J.-M."/>
        </authorList>
    </citation>
    <scope>NUCLEOTIDE SEQUENCE [LARGE SCALE GENOMIC DNA]</scope>
    <source>
        <strain>Twist</strain>
    </source>
</reference>
<gene>
    <name evidence="1" type="primary">rplE</name>
    <name type="ordered locus">TWT_542</name>
</gene>
<name>RL5_TROWT</name>
<protein>
    <recommendedName>
        <fullName evidence="1">Large ribosomal subunit protein uL5</fullName>
    </recommendedName>
    <alternativeName>
        <fullName evidence="2">50S ribosomal protein L5</fullName>
    </alternativeName>
</protein>
<proteinExistence type="inferred from homology"/>
<dbReference type="EMBL" id="AE014184">
    <property type="protein sequence ID" value="AAO44639.1"/>
    <property type="molecule type" value="Genomic_DNA"/>
</dbReference>
<dbReference type="RefSeq" id="WP_011096177.1">
    <property type="nucleotide sequence ID" value="NC_004572.3"/>
</dbReference>
<dbReference type="SMR" id="Q83FZ8"/>
<dbReference type="STRING" id="203267.TWT_542"/>
<dbReference type="GeneID" id="67387995"/>
<dbReference type="KEGG" id="twh:TWT_542"/>
<dbReference type="eggNOG" id="COG0094">
    <property type="taxonomic scope" value="Bacteria"/>
</dbReference>
<dbReference type="HOGENOM" id="CLU_061015_2_1_11"/>
<dbReference type="OrthoDB" id="9806626at2"/>
<dbReference type="Proteomes" id="UP000002200">
    <property type="component" value="Chromosome"/>
</dbReference>
<dbReference type="GO" id="GO:1990904">
    <property type="term" value="C:ribonucleoprotein complex"/>
    <property type="evidence" value="ECO:0007669"/>
    <property type="project" value="UniProtKB-KW"/>
</dbReference>
<dbReference type="GO" id="GO:0005840">
    <property type="term" value="C:ribosome"/>
    <property type="evidence" value="ECO:0007669"/>
    <property type="project" value="UniProtKB-KW"/>
</dbReference>
<dbReference type="GO" id="GO:0019843">
    <property type="term" value="F:rRNA binding"/>
    <property type="evidence" value="ECO:0007669"/>
    <property type="project" value="UniProtKB-UniRule"/>
</dbReference>
<dbReference type="GO" id="GO:0003735">
    <property type="term" value="F:structural constituent of ribosome"/>
    <property type="evidence" value="ECO:0007669"/>
    <property type="project" value="InterPro"/>
</dbReference>
<dbReference type="GO" id="GO:0000049">
    <property type="term" value="F:tRNA binding"/>
    <property type="evidence" value="ECO:0007669"/>
    <property type="project" value="UniProtKB-UniRule"/>
</dbReference>
<dbReference type="GO" id="GO:0006412">
    <property type="term" value="P:translation"/>
    <property type="evidence" value="ECO:0007669"/>
    <property type="project" value="UniProtKB-UniRule"/>
</dbReference>
<dbReference type="FunFam" id="3.30.1440.10:FF:000001">
    <property type="entry name" value="50S ribosomal protein L5"/>
    <property type="match status" value="1"/>
</dbReference>
<dbReference type="Gene3D" id="3.30.1440.10">
    <property type="match status" value="1"/>
</dbReference>
<dbReference type="HAMAP" id="MF_01333_B">
    <property type="entry name" value="Ribosomal_uL5_B"/>
    <property type="match status" value="1"/>
</dbReference>
<dbReference type="InterPro" id="IPR002132">
    <property type="entry name" value="Ribosomal_uL5"/>
</dbReference>
<dbReference type="InterPro" id="IPR020930">
    <property type="entry name" value="Ribosomal_uL5_bac-type"/>
</dbReference>
<dbReference type="InterPro" id="IPR031309">
    <property type="entry name" value="Ribosomal_uL5_C"/>
</dbReference>
<dbReference type="InterPro" id="IPR022803">
    <property type="entry name" value="Ribosomal_uL5_dom_sf"/>
</dbReference>
<dbReference type="InterPro" id="IPR031310">
    <property type="entry name" value="Ribosomal_uL5_N"/>
</dbReference>
<dbReference type="NCBIfam" id="NF000585">
    <property type="entry name" value="PRK00010.1"/>
    <property type="match status" value="1"/>
</dbReference>
<dbReference type="PANTHER" id="PTHR11994">
    <property type="entry name" value="60S RIBOSOMAL PROTEIN L11-RELATED"/>
    <property type="match status" value="1"/>
</dbReference>
<dbReference type="Pfam" id="PF00281">
    <property type="entry name" value="Ribosomal_L5"/>
    <property type="match status" value="1"/>
</dbReference>
<dbReference type="Pfam" id="PF00673">
    <property type="entry name" value="Ribosomal_L5_C"/>
    <property type="match status" value="1"/>
</dbReference>
<dbReference type="PIRSF" id="PIRSF002161">
    <property type="entry name" value="Ribosomal_L5"/>
    <property type="match status" value="1"/>
</dbReference>
<dbReference type="SUPFAM" id="SSF55282">
    <property type="entry name" value="RL5-like"/>
    <property type="match status" value="1"/>
</dbReference>
<organism>
    <name type="scientific">Tropheryma whipplei (strain Twist)</name>
    <name type="common">Whipple's bacillus</name>
    <dbReference type="NCBI Taxonomy" id="203267"/>
    <lineage>
        <taxon>Bacteria</taxon>
        <taxon>Bacillati</taxon>
        <taxon>Actinomycetota</taxon>
        <taxon>Actinomycetes</taxon>
        <taxon>Micrococcales</taxon>
        <taxon>Tropherymataceae</taxon>
        <taxon>Tropheryma</taxon>
    </lineage>
</organism>
<comment type="function">
    <text evidence="1">This is one of the proteins that bind and probably mediate the attachment of the 5S RNA into the large ribosomal subunit, where it forms part of the central protuberance. In the 70S ribosome it contacts protein S13 of the 30S subunit (bridge B1b), connecting the 2 subunits; this bridge is implicated in subunit movement. Contacts the P site tRNA; the 5S rRNA and some of its associated proteins might help stabilize positioning of ribosome-bound tRNAs.</text>
</comment>
<comment type="subunit">
    <text evidence="1">Part of the 50S ribosomal subunit; part of the 5S rRNA/L5/L18/L25 subcomplex. Contacts the 5S rRNA and the P site tRNA. Forms a bridge to the 30S subunit in the 70S ribosome.</text>
</comment>
<comment type="similarity">
    <text evidence="1">Belongs to the universal ribosomal protein uL5 family.</text>
</comment>
<sequence length="183" mass="20612">MTCYTPRLLTRYREEIVPVLMSRFDINNVHQVPSITKIVVNSGVGDAARDSKIIEGAVSDITLITGQKPRINRAKQSIAKFKLREGQAVGVTATLRGRRMWEFLDRLLTLALPRIRDFRGISDKQFDGHGNYTFGLSEQGIFHEIDQDKIDRVRGMDITVVTTSSSDDMARALLGELGFPFKK</sequence>